<comment type="cofactor">
    <cofactor evidence="1">
        <name>Fe cation</name>
        <dbReference type="ChEBI" id="CHEBI:24875"/>
    </cofactor>
    <text evidence="1">Binds 1 Fe cation per subunit.</text>
</comment>
<comment type="similarity">
    <text evidence="3">Belongs to the 4HPPD family.</text>
</comment>
<name>Y090_SYNY3</name>
<accession>Q55810</accession>
<protein>
    <recommendedName>
        <fullName>Uncharacterized protein slr0090</fullName>
    </recommendedName>
</protein>
<dbReference type="EMBL" id="BA000022">
    <property type="protein sequence ID" value="BAA10563.1"/>
    <property type="molecule type" value="Genomic_DNA"/>
</dbReference>
<dbReference type="PIR" id="S76619">
    <property type="entry name" value="S76619"/>
</dbReference>
<dbReference type="SMR" id="Q55810"/>
<dbReference type="STRING" id="1148.gene:10500067"/>
<dbReference type="PaxDb" id="1148-1001726"/>
<dbReference type="EnsemblBacteria" id="BAA10563">
    <property type="protein sequence ID" value="BAA10563"/>
    <property type="gene ID" value="BAA10563"/>
</dbReference>
<dbReference type="KEGG" id="syn:slr0090"/>
<dbReference type="eggNOG" id="COG3185">
    <property type="taxonomic scope" value="Bacteria"/>
</dbReference>
<dbReference type="InParanoid" id="Q55810"/>
<dbReference type="PhylomeDB" id="Q55810"/>
<dbReference type="BioCyc" id="MetaCyc:MONOMER-13901"/>
<dbReference type="Proteomes" id="UP000001425">
    <property type="component" value="Chromosome"/>
</dbReference>
<dbReference type="GO" id="GO:0003868">
    <property type="term" value="F:4-hydroxyphenylpyruvate dioxygenase activity"/>
    <property type="evidence" value="ECO:0000318"/>
    <property type="project" value="GO_Central"/>
</dbReference>
<dbReference type="GO" id="GO:0046872">
    <property type="term" value="F:metal ion binding"/>
    <property type="evidence" value="ECO:0007669"/>
    <property type="project" value="UniProtKB-KW"/>
</dbReference>
<dbReference type="GO" id="GO:0006572">
    <property type="term" value="P:tyrosine catabolic process"/>
    <property type="evidence" value="ECO:0000318"/>
    <property type="project" value="GO_Central"/>
</dbReference>
<dbReference type="CDD" id="cd07250">
    <property type="entry name" value="HPPD_C_like"/>
    <property type="match status" value="1"/>
</dbReference>
<dbReference type="Gene3D" id="3.10.180.10">
    <property type="entry name" value="2,3-Dihydroxybiphenyl 1,2-Dioxygenase, domain 1"/>
    <property type="match status" value="2"/>
</dbReference>
<dbReference type="InterPro" id="IPR005956">
    <property type="entry name" value="4OHPhenylPyrv_dOase"/>
</dbReference>
<dbReference type="InterPro" id="IPR041735">
    <property type="entry name" value="4OHPhenylPyrv_dOase_C"/>
</dbReference>
<dbReference type="InterPro" id="IPR029068">
    <property type="entry name" value="Glyas_Bleomycin-R_OHBP_Dase"/>
</dbReference>
<dbReference type="InterPro" id="IPR004360">
    <property type="entry name" value="Glyas_Fos-R_dOase_dom"/>
</dbReference>
<dbReference type="InterPro" id="IPR037523">
    <property type="entry name" value="VOC"/>
</dbReference>
<dbReference type="NCBIfam" id="TIGR01263">
    <property type="entry name" value="4HPPD"/>
    <property type="match status" value="1"/>
</dbReference>
<dbReference type="PANTHER" id="PTHR11959">
    <property type="entry name" value="4-HYDROXYPHENYLPYRUVATE DIOXYGENASE"/>
    <property type="match status" value="1"/>
</dbReference>
<dbReference type="PANTHER" id="PTHR11959:SF1">
    <property type="entry name" value="4-HYDROXYPHENYLPYRUVATE DIOXYGENASE"/>
    <property type="match status" value="1"/>
</dbReference>
<dbReference type="Pfam" id="PF00903">
    <property type="entry name" value="Glyoxalase"/>
    <property type="match status" value="1"/>
</dbReference>
<dbReference type="PIRSF" id="PIRSF009283">
    <property type="entry name" value="HPP_dOase"/>
    <property type="match status" value="1"/>
</dbReference>
<dbReference type="SUPFAM" id="SSF54593">
    <property type="entry name" value="Glyoxalase/Bleomycin resistance protein/Dihydroxybiphenyl dioxygenase"/>
    <property type="match status" value="1"/>
</dbReference>
<dbReference type="PROSITE" id="PS51819">
    <property type="entry name" value="VOC"/>
    <property type="match status" value="2"/>
</dbReference>
<evidence type="ECO:0000250" key="1"/>
<evidence type="ECO:0000255" key="2">
    <source>
        <dbReference type="PROSITE-ProRule" id="PRU01163"/>
    </source>
</evidence>
<evidence type="ECO:0000305" key="3"/>
<organism>
    <name type="scientific">Synechocystis sp. (strain ATCC 27184 / PCC 6803 / Kazusa)</name>
    <dbReference type="NCBI Taxonomy" id="1111708"/>
    <lineage>
        <taxon>Bacteria</taxon>
        <taxon>Bacillati</taxon>
        <taxon>Cyanobacteriota</taxon>
        <taxon>Cyanophyceae</taxon>
        <taxon>Synechococcales</taxon>
        <taxon>Merismopediaceae</taxon>
        <taxon>Synechocystis</taxon>
    </lineage>
</organism>
<feature type="chain" id="PRO_0000088416" description="Uncharacterized protein slr0090">
    <location>
        <begin position="1"/>
        <end position="339"/>
    </location>
</feature>
<feature type="domain" description="VOC 1" evidence="2">
    <location>
        <begin position="2"/>
        <end position="127"/>
    </location>
</feature>
<feature type="domain" description="VOC 2" evidence="2">
    <location>
        <begin position="141"/>
        <end position="276"/>
    </location>
</feature>
<feature type="binding site" evidence="1">
    <location>
        <position position="144"/>
    </location>
    <ligand>
        <name>Fe cation</name>
        <dbReference type="ChEBI" id="CHEBI:24875"/>
    </ligand>
</feature>
<feature type="binding site" evidence="1">
    <location>
        <position position="222"/>
    </location>
    <ligand>
        <name>Fe cation</name>
        <dbReference type="ChEBI" id="CHEBI:24875"/>
    </ligand>
</feature>
<feature type="binding site" evidence="1">
    <location>
        <position position="306"/>
    </location>
    <ligand>
        <name>Fe cation</name>
        <dbReference type="ChEBI" id="CHEBI:24875"/>
    </ligand>
</feature>
<proteinExistence type="inferred from homology"/>
<sequence>MEFDYLHLYVDDYQSAHRCYQRQWGFTCVNKIITDQGITGIYQQGQILLLISASESSLSRYADYLQKHPPGVGEVAWQVANWQKIQHQLSELQIETTPVIHPLTKAEGLTFLLWGDVHHSIYPVRSELNQNKTLHGVGLTTIDHVVLNIAADQFTQASQWYQQVFGWSVQQSFTVNTPHSGLYSEALASANGKVQFNLNCPTNNSSQIQTFLANNHGAGIQHVAFSTTSITRTVAHLRERGVNFLKIPTGYYQQQRNSSYFNYASLDWDTLQCLEILLDDQDNTGERLLLQIFSQPCYGVGTLFWEIIERRHRAKGFGQGNFQALYEAVETLEKQLEVP</sequence>
<keyword id="KW-0408">Iron</keyword>
<keyword id="KW-0479">Metal-binding</keyword>
<keyword id="KW-1185">Reference proteome</keyword>
<keyword id="KW-0677">Repeat</keyword>
<reference key="1">
    <citation type="journal article" date="1995" name="DNA Res.">
        <title>Sequence analysis of the genome of the unicellular cyanobacterium Synechocystis sp. strain PCC6803. I. Sequence features in the 1 Mb region from map positions 64% to 92% of the genome.</title>
        <authorList>
            <person name="Kaneko T."/>
            <person name="Tanaka A."/>
            <person name="Sato S."/>
            <person name="Kotani H."/>
            <person name="Sazuka T."/>
            <person name="Miyajima N."/>
            <person name="Sugiura M."/>
            <person name="Tabata S."/>
        </authorList>
    </citation>
    <scope>NUCLEOTIDE SEQUENCE [LARGE SCALE GENOMIC DNA]</scope>
    <source>
        <strain>ATCC 27184 / PCC 6803 / N-1</strain>
    </source>
</reference>
<reference key="2">
    <citation type="journal article" date="1996" name="DNA Res.">
        <title>Sequence analysis of the genome of the unicellular cyanobacterium Synechocystis sp. strain PCC6803. II. Sequence determination of the entire genome and assignment of potential protein-coding regions.</title>
        <authorList>
            <person name="Kaneko T."/>
            <person name="Sato S."/>
            <person name="Kotani H."/>
            <person name="Tanaka A."/>
            <person name="Asamizu E."/>
            <person name="Nakamura Y."/>
            <person name="Miyajima N."/>
            <person name="Hirosawa M."/>
            <person name="Sugiura M."/>
            <person name="Sasamoto S."/>
            <person name="Kimura T."/>
            <person name="Hosouchi T."/>
            <person name="Matsuno A."/>
            <person name="Muraki A."/>
            <person name="Nakazaki N."/>
            <person name="Naruo K."/>
            <person name="Okumura S."/>
            <person name="Shimpo S."/>
            <person name="Takeuchi C."/>
            <person name="Wada T."/>
            <person name="Watanabe A."/>
            <person name="Yamada M."/>
            <person name="Yasuda M."/>
            <person name="Tabata S."/>
        </authorList>
    </citation>
    <scope>NUCLEOTIDE SEQUENCE [LARGE SCALE GENOMIC DNA]</scope>
    <source>
        <strain>ATCC 27184 / PCC 6803 / Kazusa</strain>
    </source>
</reference>
<gene>
    <name type="ordered locus">slr0090</name>
</gene>